<sequence>MINRALISVYNKEGLLELAQFLKNKGVELISTGGTYKYLEQNDIQVTEVSKITGFDEILDGRVKTLHPVIHSGILAKRDNKEHMDTIAKKDILPIDMVVVNLYPFFDKVDDNITFEEKVEFIDIGGPTMIRAAAKNFKDVIVVTDVGDYSKLIEEIDSKGDVPYDFRKKLAGKVFNLMSAYDGAISNFLLEEDYPEYLSLSYKKMDNLRYGENPHQSAAYYTATAGTAPMKDFTQLNGKQLSYNNIKDMDIAWKVVNEFEEICCVAVKHNTPCGVALGKDLYEAYVKTYECDPTSIFGGIIAVNRKLDVKTAEEISKIFVEIVIAPDFDEEALKVLMEKKNLRIIKCSVKPTNSMEIAKVDGGILVQSADDKLVENMEVVTDKKPSKEEINNLIFGMKVCKYVKSNAIVVVKDFMAKGIGGGQVNRIWPTCHALDRAGDGVVLASDAFFPFNDVVCEAAKYGIKAIIQPGGSVRDKDSIEECNKNGISMVFTGVRHFKH</sequence>
<reference key="1">
    <citation type="journal article" date="2008" name="Proc. Natl. Acad. Sci. U.S.A.">
        <title>The genome of Clostridium kluyveri, a strict anaerobe with unique metabolic features.</title>
        <authorList>
            <person name="Seedorf H."/>
            <person name="Fricke W.F."/>
            <person name="Veith B."/>
            <person name="Brueggemann H."/>
            <person name="Liesegang H."/>
            <person name="Strittmatter A."/>
            <person name="Miethke M."/>
            <person name="Buckel W."/>
            <person name="Hinderberger J."/>
            <person name="Li F."/>
            <person name="Hagemeier C."/>
            <person name="Thauer R.K."/>
            <person name="Gottschalk G."/>
        </authorList>
    </citation>
    <scope>NUCLEOTIDE SEQUENCE [LARGE SCALE GENOMIC DNA]</scope>
    <source>
        <strain>ATCC 8527 / DSM 555 / NBRC 12016 / NCIMB 10680 / K1</strain>
    </source>
</reference>
<protein>
    <recommendedName>
        <fullName evidence="1">Bifunctional purine biosynthesis protein PurH</fullName>
    </recommendedName>
    <domain>
        <recommendedName>
            <fullName evidence="1">Phosphoribosylaminoimidazolecarboxamide formyltransferase</fullName>
            <ecNumber evidence="1">2.1.2.3</ecNumber>
        </recommendedName>
        <alternativeName>
            <fullName evidence="1">AICAR transformylase</fullName>
        </alternativeName>
    </domain>
    <domain>
        <recommendedName>
            <fullName evidence="1">IMP cyclohydrolase</fullName>
            <ecNumber evidence="1">3.5.4.10</ecNumber>
        </recommendedName>
        <alternativeName>
            <fullName evidence="1">ATIC</fullName>
        </alternativeName>
        <alternativeName>
            <fullName evidence="1">IMP synthase</fullName>
        </alternativeName>
        <alternativeName>
            <fullName evidence="1">Inosinicase</fullName>
        </alternativeName>
    </domain>
</protein>
<proteinExistence type="inferred from homology"/>
<keyword id="KW-0378">Hydrolase</keyword>
<keyword id="KW-0511">Multifunctional enzyme</keyword>
<keyword id="KW-0658">Purine biosynthesis</keyword>
<keyword id="KW-1185">Reference proteome</keyword>
<keyword id="KW-0808">Transferase</keyword>
<organism>
    <name type="scientific">Clostridium kluyveri (strain ATCC 8527 / DSM 555 / NBRC 12016 / NCIMB 10680 / K1)</name>
    <dbReference type="NCBI Taxonomy" id="431943"/>
    <lineage>
        <taxon>Bacteria</taxon>
        <taxon>Bacillati</taxon>
        <taxon>Bacillota</taxon>
        <taxon>Clostridia</taxon>
        <taxon>Eubacteriales</taxon>
        <taxon>Clostridiaceae</taxon>
        <taxon>Clostridium</taxon>
    </lineage>
</organism>
<feature type="chain" id="PRO_1000076479" description="Bifunctional purine biosynthesis protein PurH">
    <location>
        <begin position="1"/>
        <end position="499"/>
    </location>
</feature>
<feature type="domain" description="MGS-like" evidence="2">
    <location>
        <begin position="1"/>
        <end position="144"/>
    </location>
</feature>
<accession>A5N0Q0</accession>
<evidence type="ECO:0000255" key="1">
    <source>
        <dbReference type="HAMAP-Rule" id="MF_00139"/>
    </source>
</evidence>
<evidence type="ECO:0000255" key="2">
    <source>
        <dbReference type="PROSITE-ProRule" id="PRU01202"/>
    </source>
</evidence>
<name>PUR9_CLOK5</name>
<gene>
    <name evidence="1" type="primary">purH</name>
    <name type="ordered locus">CKL_2684</name>
</gene>
<dbReference type="EC" id="2.1.2.3" evidence="1"/>
<dbReference type="EC" id="3.5.4.10" evidence="1"/>
<dbReference type="EMBL" id="CP000673">
    <property type="protein sequence ID" value="EDK34696.1"/>
    <property type="molecule type" value="Genomic_DNA"/>
</dbReference>
<dbReference type="RefSeq" id="WP_012103026.1">
    <property type="nucleotide sequence ID" value="NC_009706.1"/>
</dbReference>
<dbReference type="SMR" id="A5N0Q0"/>
<dbReference type="STRING" id="431943.CKL_2684"/>
<dbReference type="KEGG" id="ckl:CKL_2684"/>
<dbReference type="eggNOG" id="COG0138">
    <property type="taxonomic scope" value="Bacteria"/>
</dbReference>
<dbReference type="HOGENOM" id="CLU_016316_5_2_9"/>
<dbReference type="UniPathway" id="UPA00074">
    <property type="reaction ID" value="UER00133"/>
</dbReference>
<dbReference type="UniPathway" id="UPA00074">
    <property type="reaction ID" value="UER00135"/>
</dbReference>
<dbReference type="Proteomes" id="UP000002411">
    <property type="component" value="Chromosome"/>
</dbReference>
<dbReference type="GO" id="GO:0005829">
    <property type="term" value="C:cytosol"/>
    <property type="evidence" value="ECO:0007669"/>
    <property type="project" value="TreeGrafter"/>
</dbReference>
<dbReference type="GO" id="GO:0003937">
    <property type="term" value="F:IMP cyclohydrolase activity"/>
    <property type="evidence" value="ECO:0007669"/>
    <property type="project" value="UniProtKB-UniRule"/>
</dbReference>
<dbReference type="GO" id="GO:0004643">
    <property type="term" value="F:phosphoribosylaminoimidazolecarboxamide formyltransferase activity"/>
    <property type="evidence" value="ECO:0007669"/>
    <property type="project" value="UniProtKB-UniRule"/>
</dbReference>
<dbReference type="GO" id="GO:0006189">
    <property type="term" value="P:'de novo' IMP biosynthetic process"/>
    <property type="evidence" value="ECO:0007669"/>
    <property type="project" value="UniProtKB-UniRule"/>
</dbReference>
<dbReference type="CDD" id="cd01421">
    <property type="entry name" value="IMPCH"/>
    <property type="match status" value="1"/>
</dbReference>
<dbReference type="FunFam" id="3.40.140.20:FF:000001">
    <property type="entry name" value="Bifunctional purine biosynthesis protein PurH"/>
    <property type="match status" value="1"/>
</dbReference>
<dbReference type="FunFam" id="3.40.140.20:FF:000002">
    <property type="entry name" value="Bifunctional purine biosynthesis protein PurH"/>
    <property type="match status" value="1"/>
</dbReference>
<dbReference type="FunFam" id="3.40.50.1380:FF:000001">
    <property type="entry name" value="Bifunctional purine biosynthesis protein PurH"/>
    <property type="match status" value="1"/>
</dbReference>
<dbReference type="Gene3D" id="3.40.140.20">
    <property type="match status" value="2"/>
</dbReference>
<dbReference type="Gene3D" id="3.40.50.1380">
    <property type="entry name" value="Methylglyoxal synthase-like domain"/>
    <property type="match status" value="1"/>
</dbReference>
<dbReference type="HAMAP" id="MF_00139">
    <property type="entry name" value="PurH"/>
    <property type="match status" value="1"/>
</dbReference>
<dbReference type="InterPro" id="IPR024051">
    <property type="entry name" value="AICAR_Tfase_dup_dom_sf"/>
</dbReference>
<dbReference type="InterPro" id="IPR016193">
    <property type="entry name" value="Cytidine_deaminase-like"/>
</dbReference>
<dbReference type="InterPro" id="IPR011607">
    <property type="entry name" value="MGS-like_dom"/>
</dbReference>
<dbReference type="InterPro" id="IPR036914">
    <property type="entry name" value="MGS-like_dom_sf"/>
</dbReference>
<dbReference type="InterPro" id="IPR002695">
    <property type="entry name" value="PurH-like"/>
</dbReference>
<dbReference type="NCBIfam" id="NF002049">
    <property type="entry name" value="PRK00881.1"/>
    <property type="match status" value="1"/>
</dbReference>
<dbReference type="NCBIfam" id="TIGR00355">
    <property type="entry name" value="purH"/>
    <property type="match status" value="1"/>
</dbReference>
<dbReference type="PANTHER" id="PTHR11692:SF0">
    <property type="entry name" value="BIFUNCTIONAL PURINE BIOSYNTHESIS PROTEIN ATIC"/>
    <property type="match status" value="1"/>
</dbReference>
<dbReference type="PANTHER" id="PTHR11692">
    <property type="entry name" value="BIFUNCTIONAL PURINE BIOSYNTHESIS PROTEIN PURH"/>
    <property type="match status" value="1"/>
</dbReference>
<dbReference type="Pfam" id="PF01808">
    <property type="entry name" value="AICARFT_IMPCHas"/>
    <property type="match status" value="1"/>
</dbReference>
<dbReference type="Pfam" id="PF02142">
    <property type="entry name" value="MGS"/>
    <property type="match status" value="1"/>
</dbReference>
<dbReference type="PIRSF" id="PIRSF000414">
    <property type="entry name" value="AICARFT_IMPCHas"/>
    <property type="match status" value="1"/>
</dbReference>
<dbReference type="SMART" id="SM00798">
    <property type="entry name" value="AICARFT_IMPCHas"/>
    <property type="match status" value="1"/>
</dbReference>
<dbReference type="SMART" id="SM00851">
    <property type="entry name" value="MGS"/>
    <property type="match status" value="1"/>
</dbReference>
<dbReference type="SUPFAM" id="SSF53927">
    <property type="entry name" value="Cytidine deaminase-like"/>
    <property type="match status" value="1"/>
</dbReference>
<dbReference type="SUPFAM" id="SSF52335">
    <property type="entry name" value="Methylglyoxal synthase-like"/>
    <property type="match status" value="1"/>
</dbReference>
<dbReference type="PROSITE" id="PS51855">
    <property type="entry name" value="MGS"/>
    <property type="match status" value="1"/>
</dbReference>
<comment type="catalytic activity">
    <reaction evidence="1">
        <text>(6R)-10-formyltetrahydrofolate + 5-amino-1-(5-phospho-beta-D-ribosyl)imidazole-4-carboxamide = 5-formamido-1-(5-phospho-D-ribosyl)imidazole-4-carboxamide + (6S)-5,6,7,8-tetrahydrofolate</text>
        <dbReference type="Rhea" id="RHEA:22192"/>
        <dbReference type="ChEBI" id="CHEBI:57453"/>
        <dbReference type="ChEBI" id="CHEBI:58467"/>
        <dbReference type="ChEBI" id="CHEBI:58475"/>
        <dbReference type="ChEBI" id="CHEBI:195366"/>
        <dbReference type="EC" id="2.1.2.3"/>
    </reaction>
</comment>
<comment type="catalytic activity">
    <reaction evidence="1">
        <text>IMP + H2O = 5-formamido-1-(5-phospho-D-ribosyl)imidazole-4-carboxamide</text>
        <dbReference type="Rhea" id="RHEA:18445"/>
        <dbReference type="ChEBI" id="CHEBI:15377"/>
        <dbReference type="ChEBI" id="CHEBI:58053"/>
        <dbReference type="ChEBI" id="CHEBI:58467"/>
        <dbReference type="EC" id="3.5.4.10"/>
    </reaction>
</comment>
<comment type="pathway">
    <text evidence="1">Purine metabolism; IMP biosynthesis via de novo pathway; 5-formamido-1-(5-phospho-D-ribosyl)imidazole-4-carboxamide from 5-amino-1-(5-phospho-D-ribosyl)imidazole-4-carboxamide (10-formyl THF route): step 1/1.</text>
</comment>
<comment type="pathway">
    <text evidence="1">Purine metabolism; IMP biosynthesis via de novo pathway; IMP from 5-formamido-1-(5-phospho-D-ribosyl)imidazole-4-carboxamide: step 1/1.</text>
</comment>
<comment type="domain">
    <text evidence="1">The IMP cyclohydrolase activity resides in the N-terminal region.</text>
</comment>
<comment type="similarity">
    <text evidence="1">Belongs to the PurH family.</text>
</comment>